<proteinExistence type="evidence at protein level"/>
<reference key="1">
    <citation type="journal article" date="1997" name="Cytogenet. Cell Genet.">
        <title>Isolation, characterization and chromosomal localization of human WNT10B.</title>
        <authorList>
            <person name="Hardiman G."/>
            <person name="Kastelein R.A."/>
            <person name="Bazan J.F."/>
        </authorList>
    </citation>
    <scope>NUCLEOTIDE SEQUENCE [MRNA] (ISOFORM 1)</scope>
</reference>
<reference key="2">
    <citation type="journal article" date="2001" name="Int. J. Oncol.">
        <title>Proto-oncogene WNT10B is up-regulated by tumor necrosis factor alpha in human gastric cancer cell line MKN45.</title>
        <authorList>
            <person name="Saitoh T."/>
            <person name="Kirikoshi H."/>
            <person name="Mine T."/>
            <person name="Katoh M."/>
        </authorList>
    </citation>
    <scope>NUCLEOTIDE SEQUENCE [MRNA] (ISOFORM 1)</scope>
</reference>
<reference key="3">
    <citation type="journal article" date="2004" name="Nat. Genet.">
        <title>Complete sequencing and characterization of 21,243 full-length human cDNAs.</title>
        <authorList>
            <person name="Ota T."/>
            <person name="Suzuki Y."/>
            <person name="Nishikawa T."/>
            <person name="Otsuki T."/>
            <person name="Sugiyama T."/>
            <person name="Irie R."/>
            <person name="Wakamatsu A."/>
            <person name="Hayashi K."/>
            <person name="Sato H."/>
            <person name="Nagai K."/>
            <person name="Kimura K."/>
            <person name="Makita H."/>
            <person name="Sekine M."/>
            <person name="Obayashi M."/>
            <person name="Nishi T."/>
            <person name="Shibahara T."/>
            <person name="Tanaka T."/>
            <person name="Ishii S."/>
            <person name="Yamamoto J."/>
            <person name="Saito K."/>
            <person name="Kawai Y."/>
            <person name="Isono Y."/>
            <person name="Nakamura Y."/>
            <person name="Nagahari K."/>
            <person name="Murakami K."/>
            <person name="Yasuda T."/>
            <person name="Iwayanagi T."/>
            <person name="Wagatsuma M."/>
            <person name="Shiratori A."/>
            <person name="Sudo H."/>
            <person name="Hosoiri T."/>
            <person name="Kaku Y."/>
            <person name="Kodaira H."/>
            <person name="Kondo H."/>
            <person name="Sugawara M."/>
            <person name="Takahashi M."/>
            <person name="Kanda K."/>
            <person name="Yokoi T."/>
            <person name="Furuya T."/>
            <person name="Kikkawa E."/>
            <person name="Omura Y."/>
            <person name="Abe K."/>
            <person name="Kamihara K."/>
            <person name="Katsuta N."/>
            <person name="Sato K."/>
            <person name="Tanikawa M."/>
            <person name="Yamazaki M."/>
            <person name="Ninomiya K."/>
            <person name="Ishibashi T."/>
            <person name="Yamashita H."/>
            <person name="Murakawa K."/>
            <person name="Fujimori K."/>
            <person name="Tanai H."/>
            <person name="Kimata M."/>
            <person name="Watanabe M."/>
            <person name="Hiraoka S."/>
            <person name="Chiba Y."/>
            <person name="Ishida S."/>
            <person name="Ono Y."/>
            <person name="Takiguchi S."/>
            <person name="Watanabe S."/>
            <person name="Yosida M."/>
            <person name="Hotuta T."/>
            <person name="Kusano J."/>
            <person name="Kanehori K."/>
            <person name="Takahashi-Fujii A."/>
            <person name="Hara H."/>
            <person name="Tanase T.-O."/>
            <person name="Nomura Y."/>
            <person name="Togiya S."/>
            <person name="Komai F."/>
            <person name="Hara R."/>
            <person name="Takeuchi K."/>
            <person name="Arita M."/>
            <person name="Imose N."/>
            <person name="Musashino K."/>
            <person name="Yuuki H."/>
            <person name="Oshima A."/>
            <person name="Sasaki N."/>
            <person name="Aotsuka S."/>
            <person name="Yoshikawa Y."/>
            <person name="Matsunawa H."/>
            <person name="Ichihara T."/>
            <person name="Shiohata N."/>
            <person name="Sano S."/>
            <person name="Moriya S."/>
            <person name="Momiyama H."/>
            <person name="Satoh N."/>
            <person name="Takami S."/>
            <person name="Terashima Y."/>
            <person name="Suzuki O."/>
            <person name="Nakagawa S."/>
            <person name="Senoh A."/>
            <person name="Mizoguchi H."/>
            <person name="Goto Y."/>
            <person name="Shimizu F."/>
            <person name="Wakebe H."/>
            <person name="Hishigaki H."/>
            <person name="Watanabe T."/>
            <person name="Sugiyama A."/>
            <person name="Takemoto M."/>
            <person name="Kawakami B."/>
            <person name="Yamazaki M."/>
            <person name="Watanabe K."/>
            <person name="Kumagai A."/>
            <person name="Itakura S."/>
            <person name="Fukuzumi Y."/>
            <person name="Fujimori Y."/>
            <person name="Komiyama M."/>
            <person name="Tashiro H."/>
            <person name="Tanigami A."/>
            <person name="Fujiwara T."/>
            <person name="Ono T."/>
            <person name="Yamada K."/>
            <person name="Fujii Y."/>
            <person name="Ozaki K."/>
            <person name="Hirao M."/>
            <person name="Ohmori Y."/>
            <person name="Kawabata A."/>
            <person name="Hikiji T."/>
            <person name="Kobatake N."/>
            <person name="Inagaki H."/>
            <person name="Ikema Y."/>
            <person name="Okamoto S."/>
            <person name="Okitani R."/>
            <person name="Kawakami T."/>
            <person name="Noguchi S."/>
            <person name="Itoh T."/>
            <person name="Shigeta K."/>
            <person name="Senba T."/>
            <person name="Matsumura K."/>
            <person name="Nakajima Y."/>
            <person name="Mizuno T."/>
            <person name="Morinaga M."/>
            <person name="Sasaki M."/>
            <person name="Togashi T."/>
            <person name="Oyama M."/>
            <person name="Hata H."/>
            <person name="Watanabe M."/>
            <person name="Komatsu T."/>
            <person name="Mizushima-Sugano J."/>
            <person name="Satoh T."/>
            <person name="Shirai Y."/>
            <person name="Takahashi Y."/>
            <person name="Nakagawa K."/>
            <person name="Okumura K."/>
            <person name="Nagase T."/>
            <person name="Nomura N."/>
            <person name="Kikuchi H."/>
            <person name="Masuho Y."/>
            <person name="Yamashita R."/>
            <person name="Nakai K."/>
            <person name="Yada T."/>
            <person name="Nakamura Y."/>
            <person name="Ohara O."/>
            <person name="Isogai T."/>
            <person name="Sugano S."/>
        </authorList>
    </citation>
    <scope>NUCLEOTIDE SEQUENCE [LARGE SCALE MRNA] (ISOFORM 1)</scope>
    <source>
        <tissue>Subthalamic nucleus</tissue>
    </source>
</reference>
<reference key="4">
    <citation type="journal article" date="2006" name="Nature">
        <title>The finished DNA sequence of human chromosome 12.</title>
        <authorList>
            <person name="Scherer S.E."/>
            <person name="Muzny D.M."/>
            <person name="Buhay C.J."/>
            <person name="Chen R."/>
            <person name="Cree A."/>
            <person name="Ding Y."/>
            <person name="Dugan-Rocha S."/>
            <person name="Gill R."/>
            <person name="Gunaratne P."/>
            <person name="Harris R.A."/>
            <person name="Hawes A.C."/>
            <person name="Hernandez J."/>
            <person name="Hodgson A.V."/>
            <person name="Hume J."/>
            <person name="Jackson A."/>
            <person name="Khan Z.M."/>
            <person name="Kovar-Smith C."/>
            <person name="Lewis L.R."/>
            <person name="Lozado R.J."/>
            <person name="Metzker M.L."/>
            <person name="Milosavljevic A."/>
            <person name="Miner G.R."/>
            <person name="Montgomery K.T."/>
            <person name="Morgan M.B."/>
            <person name="Nazareth L.V."/>
            <person name="Scott G."/>
            <person name="Sodergren E."/>
            <person name="Song X.-Z."/>
            <person name="Steffen D."/>
            <person name="Lovering R.C."/>
            <person name="Wheeler D.A."/>
            <person name="Worley K.C."/>
            <person name="Yuan Y."/>
            <person name="Zhang Z."/>
            <person name="Adams C.Q."/>
            <person name="Ansari-Lari M.A."/>
            <person name="Ayele M."/>
            <person name="Brown M.J."/>
            <person name="Chen G."/>
            <person name="Chen Z."/>
            <person name="Clerc-Blankenburg K.P."/>
            <person name="Davis C."/>
            <person name="Delgado O."/>
            <person name="Dinh H.H."/>
            <person name="Draper H."/>
            <person name="Gonzalez-Garay M.L."/>
            <person name="Havlak P."/>
            <person name="Jackson L.R."/>
            <person name="Jacob L.S."/>
            <person name="Kelly S.H."/>
            <person name="Li L."/>
            <person name="Li Z."/>
            <person name="Liu J."/>
            <person name="Liu W."/>
            <person name="Lu J."/>
            <person name="Maheshwari M."/>
            <person name="Nguyen B.-V."/>
            <person name="Okwuonu G.O."/>
            <person name="Pasternak S."/>
            <person name="Perez L.M."/>
            <person name="Plopper F.J.H."/>
            <person name="Santibanez J."/>
            <person name="Shen H."/>
            <person name="Tabor P.E."/>
            <person name="Verduzco D."/>
            <person name="Waldron L."/>
            <person name="Wang Q."/>
            <person name="Williams G.A."/>
            <person name="Zhang J."/>
            <person name="Zhou J."/>
            <person name="Allen C.C."/>
            <person name="Amin A.G."/>
            <person name="Anyalebechi V."/>
            <person name="Bailey M."/>
            <person name="Barbaria J.A."/>
            <person name="Bimage K.E."/>
            <person name="Bryant N.P."/>
            <person name="Burch P.E."/>
            <person name="Burkett C.E."/>
            <person name="Burrell K.L."/>
            <person name="Calderon E."/>
            <person name="Cardenas V."/>
            <person name="Carter K."/>
            <person name="Casias K."/>
            <person name="Cavazos I."/>
            <person name="Cavazos S.R."/>
            <person name="Ceasar H."/>
            <person name="Chacko J."/>
            <person name="Chan S.N."/>
            <person name="Chavez D."/>
            <person name="Christopoulos C."/>
            <person name="Chu J."/>
            <person name="Cockrell R."/>
            <person name="Cox C.D."/>
            <person name="Dang M."/>
            <person name="Dathorne S.R."/>
            <person name="David R."/>
            <person name="Davis C.M."/>
            <person name="Davy-Carroll L."/>
            <person name="Deshazo D.R."/>
            <person name="Donlin J.E."/>
            <person name="D'Souza L."/>
            <person name="Eaves K.A."/>
            <person name="Egan A."/>
            <person name="Emery-Cohen A.J."/>
            <person name="Escotto M."/>
            <person name="Flagg N."/>
            <person name="Forbes L.D."/>
            <person name="Gabisi A.M."/>
            <person name="Garza M."/>
            <person name="Hamilton C."/>
            <person name="Henderson N."/>
            <person name="Hernandez O."/>
            <person name="Hines S."/>
            <person name="Hogues M.E."/>
            <person name="Huang M."/>
            <person name="Idlebird D.G."/>
            <person name="Johnson R."/>
            <person name="Jolivet A."/>
            <person name="Jones S."/>
            <person name="Kagan R."/>
            <person name="King L.M."/>
            <person name="Leal B."/>
            <person name="Lebow H."/>
            <person name="Lee S."/>
            <person name="LeVan J.M."/>
            <person name="Lewis L.C."/>
            <person name="London P."/>
            <person name="Lorensuhewa L.M."/>
            <person name="Loulseged H."/>
            <person name="Lovett D.A."/>
            <person name="Lucier A."/>
            <person name="Lucier R.L."/>
            <person name="Ma J."/>
            <person name="Madu R.C."/>
            <person name="Mapua P."/>
            <person name="Martindale A.D."/>
            <person name="Martinez E."/>
            <person name="Massey E."/>
            <person name="Mawhiney S."/>
            <person name="Meador M.G."/>
            <person name="Mendez S."/>
            <person name="Mercado C."/>
            <person name="Mercado I.C."/>
            <person name="Merritt C.E."/>
            <person name="Miner Z.L."/>
            <person name="Minja E."/>
            <person name="Mitchell T."/>
            <person name="Mohabbat F."/>
            <person name="Mohabbat K."/>
            <person name="Montgomery B."/>
            <person name="Moore N."/>
            <person name="Morris S."/>
            <person name="Munidasa M."/>
            <person name="Ngo R.N."/>
            <person name="Nguyen N.B."/>
            <person name="Nickerson E."/>
            <person name="Nwaokelemeh O.O."/>
            <person name="Nwokenkwo S."/>
            <person name="Obregon M."/>
            <person name="Oguh M."/>
            <person name="Oragunye N."/>
            <person name="Oviedo R.J."/>
            <person name="Parish B.J."/>
            <person name="Parker D.N."/>
            <person name="Parrish J."/>
            <person name="Parks K.L."/>
            <person name="Paul H.A."/>
            <person name="Payton B.A."/>
            <person name="Perez A."/>
            <person name="Perrin W."/>
            <person name="Pickens A."/>
            <person name="Primus E.L."/>
            <person name="Pu L.-L."/>
            <person name="Puazo M."/>
            <person name="Quiles M.M."/>
            <person name="Quiroz J.B."/>
            <person name="Rabata D."/>
            <person name="Reeves K."/>
            <person name="Ruiz S.J."/>
            <person name="Shao H."/>
            <person name="Sisson I."/>
            <person name="Sonaike T."/>
            <person name="Sorelle R.P."/>
            <person name="Sutton A.E."/>
            <person name="Svatek A.F."/>
            <person name="Svetz L.A."/>
            <person name="Tamerisa K.S."/>
            <person name="Taylor T.R."/>
            <person name="Teague B."/>
            <person name="Thomas N."/>
            <person name="Thorn R.D."/>
            <person name="Trejos Z.Y."/>
            <person name="Trevino B.K."/>
            <person name="Ukegbu O.N."/>
            <person name="Urban J.B."/>
            <person name="Vasquez L.I."/>
            <person name="Vera V.A."/>
            <person name="Villasana D.M."/>
            <person name="Wang L."/>
            <person name="Ward-Moore S."/>
            <person name="Warren J.T."/>
            <person name="Wei X."/>
            <person name="White F."/>
            <person name="Williamson A.L."/>
            <person name="Wleczyk R."/>
            <person name="Wooden H.S."/>
            <person name="Wooden S.H."/>
            <person name="Yen J."/>
            <person name="Yoon L."/>
            <person name="Yoon V."/>
            <person name="Zorrilla S.E."/>
            <person name="Nelson D."/>
            <person name="Kucherlapati R."/>
            <person name="Weinstock G."/>
            <person name="Gibbs R.A."/>
        </authorList>
    </citation>
    <scope>NUCLEOTIDE SEQUENCE [LARGE SCALE GENOMIC DNA]</scope>
</reference>
<reference key="5">
    <citation type="submission" date="2005-07" db="EMBL/GenBank/DDBJ databases">
        <authorList>
            <person name="Mural R.J."/>
            <person name="Istrail S."/>
            <person name="Sutton G.G."/>
            <person name="Florea L."/>
            <person name="Halpern A.L."/>
            <person name="Mobarry C.M."/>
            <person name="Lippert R."/>
            <person name="Walenz B."/>
            <person name="Shatkay H."/>
            <person name="Dew I."/>
            <person name="Miller J.R."/>
            <person name="Flanigan M.J."/>
            <person name="Edwards N.J."/>
            <person name="Bolanos R."/>
            <person name="Fasulo D."/>
            <person name="Halldorsson B.V."/>
            <person name="Hannenhalli S."/>
            <person name="Turner R."/>
            <person name="Yooseph S."/>
            <person name="Lu F."/>
            <person name="Nusskern D.R."/>
            <person name="Shue B.C."/>
            <person name="Zheng X.H."/>
            <person name="Zhong F."/>
            <person name="Delcher A.L."/>
            <person name="Huson D.H."/>
            <person name="Kravitz S.A."/>
            <person name="Mouchard L."/>
            <person name="Reinert K."/>
            <person name="Remington K.A."/>
            <person name="Clark A.G."/>
            <person name="Waterman M.S."/>
            <person name="Eichler E.E."/>
            <person name="Adams M.D."/>
            <person name="Hunkapiller M.W."/>
            <person name="Myers E.W."/>
            <person name="Venter J.C."/>
        </authorList>
    </citation>
    <scope>NUCLEOTIDE SEQUENCE [LARGE SCALE GENOMIC DNA]</scope>
</reference>
<reference key="6">
    <citation type="journal article" date="2004" name="Genome Res.">
        <title>The status, quality, and expansion of the NIH full-length cDNA project: the Mammalian Gene Collection (MGC).</title>
        <authorList>
            <consortium name="The MGC Project Team"/>
        </authorList>
    </citation>
    <scope>NUCLEOTIDE SEQUENCE [LARGE SCALE MRNA] (ISOFORMS 1 AND 2)</scope>
</reference>
<reference key="7">
    <citation type="journal article" date="1997" name="Oncogene">
        <title>A novel human Wnt gene, WNT10B, maps to 12q13 and is expressed in human breast carcinomas.</title>
        <authorList>
            <person name="Bui T.D."/>
            <person name="Rankin J."/>
            <person name="Smith K."/>
            <person name="Huguet E.L."/>
            <person name="Ruben S."/>
            <person name="Strachan T."/>
            <person name="Harris A.L."/>
            <person name="Lindsay S."/>
        </authorList>
    </citation>
    <scope>NUCLEOTIDE SEQUENCE [MRNA] OF 45-347 (ISOFORM 1)</scope>
    <source>
        <tissue>Fetal brain</tissue>
    </source>
</reference>
<reference key="8">
    <citation type="journal article" date="1997" name="Genomics">
        <title>Isolation of two novel WNT genes, WNT14 and WNT15, one of which (WNT15) is closely linked to WNT3 on human chromosome 17q21.</title>
        <authorList>
            <person name="Bergstein I."/>
            <person name="Eisenberg L.M."/>
            <person name="Bhalerao J."/>
            <person name="Jenkins N.A."/>
            <person name="Copeland N.G."/>
            <person name="Osborne M.P."/>
            <person name="Bowcock A.M."/>
            <person name="Brown A.M.C."/>
        </authorList>
    </citation>
    <scope>NUCLEOTIDE SEQUENCE [GENOMIC DNA] OF 253-368</scope>
    <source>
        <tissue>Placenta</tissue>
    </source>
</reference>
<reference key="9">
    <citation type="journal article" date="2008" name="Proc. Natl. Acad. Sci. U.S.A.">
        <title>A quantitative atlas of mitotic phosphorylation.</title>
        <authorList>
            <person name="Dephoure N."/>
            <person name="Zhou C."/>
            <person name="Villen J."/>
            <person name="Beausoleil S.A."/>
            <person name="Bakalarski C.E."/>
            <person name="Elledge S.J."/>
            <person name="Gygi S.P."/>
        </authorList>
    </citation>
    <scope>PHOSPHORYLATION [LARGE SCALE ANALYSIS] AT THR-46</scope>
    <scope>IDENTIFICATION BY MASS SPECTROMETRY [LARGE SCALE ANALYSIS]</scope>
    <source>
        <tissue>Cervix carcinoma</tissue>
    </source>
</reference>
<reference key="10">
    <citation type="journal article" date="2012" name="Acta Physiol.">
        <title>The role of WNT10B in physiology and disease.</title>
        <authorList>
            <person name="Wend P."/>
            <person name="Wend K."/>
            <person name="Krum S.A."/>
            <person name="Miranda-Carboni G.A."/>
        </authorList>
    </citation>
    <scope>REVIEW ON FUNCTION</scope>
</reference>
<reference key="11">
    <citation type="journal article" date="2016" name="Elife">
        <title>Active and water-soluble form of lipidated Wnt protein is maintained by a serum glycoprotein afamin/alpha-albumin.</title>
        <authorList>
            <person name="Mihara E."/>
            <person name="Hirai H."/>
            <person name="Yamamoto H."/>
            <person name="Tamura-Kawakami K."/>
            <person name="Matano M."/>
            <person name="Kikuchi A."/>
            <person name="Sato T."/>
            <person name="Takagi J."/>
        </authorList>
    </citation>
    <scope>INTERACTION WITH AFM</scope>
    <scope>SUBCELLULAR LOCATION</scope>
</reference>
<reference key="12">
    <citation type="journal article" date="2006" name="Diabetologia">
        <title>WNT10B mutations in human obesity.</title>
        <authorList>
            <person name="Christodoulides C."/>
            <person name="Scarda A."/>
            <person name="Granzotto M."/>
            <person name="Milan G."/>
            <person name="Dalla Nora E."/>
            <person name="Keogh J."/>
            <person name="De Pergola G."/>
            <person name="Stirling H."/>
            <person name="Pannacciulli N."/>
            <person name="Sethi J.K."/>
            <person name="Federspil G."/>
            <person name="Vidal-Puig A."/>
            <person name="Farooqi I.S."/>
            <person name="O'Rahilly S."/>
            <person name="Vettor R."/>
        </authorList>
    </citation>
    <scope>VARIANTS TYR-77; TYR-256; THR-285 AND SER-301</scope>
    <scope>ASSOCIATION OF VARIANT TYR-256 WITH OBESITY</scope>
    <scope>FUNCTION</scope>
</reference>
<reference key="13">
    <citation type="journal article" date="2008" name="Hum. Mol. Genet.">
        <title>Homozygous WNT10b mutation and complex inheritance in Split-Hand/Foot Malformation.</title>
        <authorList>
            <person name="Ugur S.A."/>
            <person name="Tolun A."/>
        </authorList>
    </citation>
    <scope>VARIANT SHFM6 TRP-332</scope>
</reference>
<reference key="14">
    <citation type="journal article" date="2016" name="Am. J. Hum. Genet.">
        <title>Mutations in WNT10B are identified in individuals with oligodontia.</title>
        <authorList>
            <person name="Yu P."/>
            <person name="Yang W."/>
            <person name="Han D."/>
            <person name="Wang X."/>
            <person name="Guo S."/>
            <person name="Li J."/>
            <person name="Li F."/>
            <person name="Zhang X."/>
            <person name="Wong S.W."/>
            <person name="Bai B."/>
            <person name="Liu Y."/>
            <person name="Du J."/>
            <person name="Sun Z.S."/>
            <person name="Shi S."/>
            <person name="Feng H."/>
            <person name="Cai T."/>
        </authorList>
    </citation>
    <scope>INVOLVEMENT IN STHAG8</scope>
    <scope>VARIANT STHAG8 GLN-211</scope>
    <scope>CHARACTERIZATION OF VARIANT STHAG8 GLN-211</scope>
    <scope>FUNCTION</scope>
</reference>
<protein>
    <recommendedName>
        <fullName>Protein Wnt-10b</fullName>
    </recommendedName>
    <alternativeName>
        <fullName>Protein Wnt-12</fullName>
    </alternativeName>
</protein>
<name>WN10B_HUMAN</name>
<comment type="function">
    <text evidence="12 13 14">Member of the Wnt ligand gene family that encodes for secreted proteins, which activate the Wnt signaling cascade. Specifically activates canonical Wnt/beta-catenin signaling and thus triggers beta-catenin/LEF/TCF-mediated transcriptional programs. Involved in signaling networks controlling stemness, pluripotency and cell fate decisions. Acts in the immune system, mammary gland, adipose tissue, bone and skin.</text>
</comment>
<comment type="subunit">
    <text>Forms a soluble 1:1 complex with AFM; this prevents oligomerization and is required for prolonged biological activity (PubMed:26902720). The complex with AFM may represent the physiological form in body fluids (PubMed:26902720).</text>
</comment>
<comment type="interaction">
    <interactant intactId="EBI-21797207">
        <id>O00744</id>
    </interactant>
    <interactant intactId="EBI-77613">
        <id>P05067</id>
        <label>APP</label>
    </interactant>
    <organismsDiffer>false</organismsDiffer>
    <experiments>3</experiments>
</comment>
<comment type="subcellular location">
    <subcellularLocation>
        <location evidence="11">Secreted</location>
        <location evidence="11">Extracellular space</location>
        <location evidence="11">Extracellular matrix</location>
    </subcellularLocation>
    <subcellularLocation>
        <location evidence="8">Secreted</location>
    </subcellularLocation>
</comment>
<comment type="alternative products">
    <event type="alternative splicing"/>
    <isoform>
        <id>O00744-1</id>
        <name>1</name>
        <sequence type="displayed"/>
    </isoform>
    <isoform>
        <id>O00744-2</id>
        <name>2</name>
        <sequence type="described" ref="VSP_056289 VSP_056290"/>
    </isoform>
</comment>
<comment type="tissue specificity">
    <text>Detected in most adult tissues. Highest levels were found in heart and skeletal muscle. Low levels are found in brain.</text>
</comment>
<comment type="developmental stage">
    <text>Infant brain has higher levels of WNT10B than adult brain.</text>
</comment>
<comment type="PTM">
    <text evidence="1 3">Palmitoleoylation is required for efficient binding to frizzled receptors. Depalmitoleoylation leads to Wnt signaling pathway inhibition.</text>
</comment>
<comment type="disease" evidence="7">
    <disease id="DI-02495">
        <name>Split-hand/foot malformation 6</name>
        <acronym>SHFM6</acronym>
        <description>A limb malformation involving the central rays of the autopod and presenting with syndactyly, median clefts of the hands and feet, and aplasia and/or hypoplasia of the phalanges, metacarpals, and metatarsals. Some patients have been found to have intellectual disability, ectodermal and craniofacial findings, and orofacial clefting.</description>
        <dbReference type="MIM" id="225300"/>
    </disease>
    <text>The disease is caused by variants affecting the gene represented in this entry.</text>
</comment>
<comment type="disease" evidence="9">
    <disease id="DI-04805">
        <name>Tooth agenesis, selective, 8</name>
        <acronym>STHAG8</acronym>
        <description>A form of selective tooth agenesis, a common anomaly characterized by the congenital absence of one or more teeth. Selective tooth agenesis without associated systemic disorders has sometimes been divided into 2 types: oligodontia, defined as agenesis of 6 or more permanent teeth, and hypodontia, defined as agenesis of less than 6 teeth. The number in both cases does not include absence of third molars (wisdom teeth). STHAG8 inheritance is autosomal dominant.</description>
        <dbReference type="MIM" id="617073"/>
    </disease>
    <text evidence="9">The disease is caused by variants affecting the gene represented in this entry. Potential genotype-phenotype correlation between variants and the positions of missing teeth.</text>
</comment>
<comment type="similarity">
    <text evidence="11">Belongs to the Wnt family.</text>
</comment>
<evidence type="ECO:0000250" key="1">
    <source>
        <dbReference type="UniProtKB" id="P27467"/>
    </source>
</evidence>
<evidence type="ECO:0000250" key="2">
    <source>
        <dbReference type="UniProtKB" id="P28026"/>
    </source>
</evidence>
<evidence type="ECO:0000250" key="3">
    <source>
        <dbReference type="UniProtKB" id="P56704"/>
    </source>
</evidence>
<evidence type="ECO:0000255" key="4"/>
<evidence type="ECO:0000256" key="5">
    <source>
        <dbReference type="SAM" id="MobiDB-lite"/>
    </source>
</evidence>
<evidence type="ECO:0000269" key="6">
    <source>
    </source>
</evidence>
<evidence type="ECO:0000269" key="7">
    <source>
    </source>
</evidence>
<evidence type="ECO:0000269" key="8">
    <source>
    </source>
</evidence>
<evidence type="ECO:0000269" key="9">
    <source>
    </source>
</evidence>
<evidence type="ECO:0000303" key="10">
    <source>
    </source>
</evidence>
<evidence type="ECO:0000305" key="11"/>
<evidence type="ECO:0000305" key="12">
    <source>
    </source>
</evidence>
<evidence type="ECO:0000305" key="13">
    <source>
    </source>
</evidence>
<evidence type="ECO:0000305" key="14">
    <source>
    </source>
</evidence>
<evidence type="ECO:0007744" key="15">
    <source>
    </source>
</evidence>
<dbReference type="EMBL" id="U81787">
    <property type="protein sequence ID" value="AAB51685.1"/>
    <property type="molecule type" value="mRNA"/>
</dbReference>
<dbReference type="EMBL" id="AB070724">
    <property type="protein sequence ID" value="BAB72181.1"/>
    <property type="molecule type" value="mRNA"/>
</dbReference>
<dbReference type="EMBL" id="AK312906">
    <property type="protein sequence ID" value="BAG35752.1"/>
    <property type="molecule type" value="mRNA"/>
</dbReference>
<dbReference type="EMBL" id="AC073610">
    <property type="status" value="NOT_ANNOTATED_CDS"/>
    <property type="molecule type" value="Genomic_DNA"/>
</dbReference>
<dbReference type="EMBL" id="CH471111">
    <property type="protein sequence ID" value="EAW58028.1"/>
    <property type="molecule type" value="Genomic_DNA"/>
</dbReference>
<dbReference type="EMBL" id="BC096353">
    <property type="protein sequence ID" value="AAH96353.1"/>
    <property type="molecule type" value="mRNA"/>
</dbReference>
<dbReference type="EMBL" id="BC096354">
    <property type="protein sequence ID" value="AAH96354.1"/>
    <property type="molecule type" value="mRNA"/>
</dbReference>
<dbReference type="EMBL" id="BC096355">
    <property type="protein sequence ID" value="AAH96355.1"/>
    <property type="molecule type" value="mRNA"/>
</dbReference>
<dbReference type="EMBL" id="BC096356">
    <property type="protein sequence ID" value="AAH96356.1"/>
    <property type="molecule type" value="mRNA"/>
</dbReference>
<dbReference type="EMBL" id="X97057">
    <property type="protein sequence ID" value="CAA65769.1"/>
    <property type="molecule type" value="mRNA"/>
</dbReference>
<dbReference type="EMBL" id="AF028700">
    <property type="protein sequence ID" value="AAC39549.1"/>
    <property type="molecule type" value="Genomic_DNA"/>
</dbReference>
<dbReference type="CCDS" id="CCDS8775.1">
    <molecule id="O00744-1"/>
</dbReference>
<dbReference type="RefSeq" id="NP_003385.2">
    <molecule id="O00744-1"/>
    <property type="nucleotide sequence ID" value="NM_003394.3"/>
</dbReference>
<dbReference type="SMR" id="O00744"/>
<dbReference type="BioGRID" id="113317">
    <property type="interactions" value="34"/>
</dbReference>
<dbReference type="FunCoup" id="O00744">
    <property type="interactions" value="647"/>
</dbReference>
<dbReference type="IntAct" id="O00744">
    <property type="interactions" value="20"/>
</dbReference>
<dbReference type="STRING" id="9606.ENSP00000301061"/>
<dbReference type="GlyCosmos" id="O00744">
    <property type="glycosylation" value="2 sites, No reported glycans"/>
</dbReference>
<dbReference type="GlyGen" id="O00744">
    <property type="glycosylation" value="2 sites, 1 N-linked glycan (1 site)"/>
</dbReference>
<dbReference type="iPTMnet" id="O00744"/>
<dbReference type="PhosphoSitePlus" id="O00744"/>
<dbReference type="SwissPalm" id="O00744"/>
<dbReference type="BioMuta" id="WNT10B"/>
<dbReference type="MassIVE" id="O00744"/>
<dbReference type="PaxDb" id="9606-ENSP00000301061"/>
<dbReference type="PeptideAtlas" id="O00744"/>
<dbReference type="ProteomicsDB" id="48012">
    <molecule id="O00744-1"/>
</dbReference>
<dbReference type="ProteomicsDB" id="62286"/>
<dbReference type="Antibodypedia" id="25755">
    <property type="antibodies" value="236 antibodies from 35 providers"/>
</dbReference>
<dbReference type="DNASU" id="7480"/>
<dbReference type="Ensembl" id="ENST00000301061.9">
    <molecule id="O00744-1"/>
    <property type="protein sequence ID" value="ENSP00000301061.4"/>
    <property type="gene ID" value="ENSG00000169884.14"/>
</dbReference>
<dbReference type="Ensembl" id="ENST00000407467.5">
    <molecule id="O00744-2"/>
    <property type="protein sequence ID" value="ENSP00000384691.1"/>
    <property type="gene ID" value="ENSG00000169884.14"/>
</dbReference>
<dbReference type="GeneID" id="7480"/>
<dbReference type="KEGG" id="hsa:7480"/>
<dbReference type="MANE-Select" id="ENST00000301061.9">
    <property type="protein sequence ID" value="ENSP00000301061.4"/>
    <property type="RefSeq nucleotide sequence ID" value="NM_003394.4"/>
    <property type="RefSeq protein sequence ID" value="NP_003385.2"/>
</dbReference>
<dbReference type="UCSC" id="uc001rss.4">
    <molecule id="O00744-1"/>
    <property type="organism name" value="human"/>
</dbReference>
<dbReference type="AGR" id="HGNC:12775"/>
<dbReference type="CTD" id="7480"/>
<dbReference type="DisGeNET" id="7480"/>
<dbReference type="GeneCards" id="WNT10B"/>
<dbReference type="HGNC" id="HGNC:12775">
    <property type="gene designation" value="WNT10B"/>
</dbReference>
<dbReference type="HPA" id="ENSG00000169884">
    <property type="expression patterns" value="Tissue enriched (brain)"/>
</dbReference>
<dbReference type="MalaCards" id="WNT10B"/>
<dbReference type="MIM" id="225300">
    <property type="type" value="phenotype"/>
</dbReference>
<dbReference type="MIM" id="601906">
    <property type="type" value="gene"/>
</dbReference>
<dbReference type="MIM" id="617073">
    <property type="type" value="phenotype"/>
</dbReference>
<dbReference type="neXtProt" id="NX_O00744"/>
<dbReference type="OpenTargets" id="ENSG00000169884"/>
<dbReference type="Orphanet" id="2440">
    <property type="disease" value="Isolated split hand-split foot malformation"/>
</dbReference>
<dbReference type="Orphanet" id="99798">
    <property type="disease" value="Oligodontia"/>
</dbReference>
<dbReference type="PharmGKB" id="PA37377"/>
<dbReference type="VEuPathDB" id="HostDB:ENSG00000169884"/>
<dbReference type="eggNOG" id="KOG3913">
    <property type="taxonomic scope" value="Eukaryota"/>
</dbReference>
<dbReference type="GeneTree" id="ENSGT00940000160653"/>
<dbReference type="HOGENOM" id="CLU_033039_1_3_1"/>
<dbReference type="InParanoid" id="O00744"/>
<dbReference type="OMA" id="INAHNRN"/>
<dbReference type="OrthoDB" id="5945655at2759"/>
<dbReference type="PAN-GO" id="O00744">
    <property type="GO annotations" value="6 GO annotations based on evolutionary models"/>
</dbReference>
<dbReference type="PhylomeDB" id="O00744"/>
<dbReference type="TreeFam" id="TF105310"/>
<dbReference type="PathwayCommons" id="O00744"/>
<dbReference type="Reactome" id="R-HSA-3238698">
    <property type="pathway name" value="WNT ligand biogenesis and trafficking"/>
</dbReference>
<dbReference type="Reactome" id="R-HSA-373080">
    <property type="pathway name" value="Class B/2 (Secretin family receptors)"/>
</dbReference>
<dbReference type="Reactome" id="R-HSA-381340">
    <property type="pathway name" value="Transcriptional regulation of white adipocyte differentiation"/>
</dbReference>
<dbReference type="SignaLink" id="O00744"/>
<dbReference type="SIGNOR" id="O00744"/>
<dbReference type="BioGRID-ORCS" id="7480">
    <property type="hits" value="10 hits in 1164 CRISPR screens"/>
</dbReference>
<dbReference type="GeneWiki" id="WNT10B"/>
<dbReference type="GenomeRNAi" id="7480"/>
<dbReference type="Pharos" id="O00744">
    <property type="development level" value="Tbio"/>
</dbReference>
<dbReference type="PRO" id="PR:O00744"/>
<dbReference type="Proteomes" id="UP000005640">
    <property type="component" value="Chromosome 12"/>
</dbReference>
<dbReference type="RNAct" id="O00744">
    <property type="molecule type" value="protein"/>
</dbReference>
<dbReference type="Bgee" id="ENSG00000169884">
    <property type="expression patterns" value="Expressed in orbitofrontal cortex and 154 other cell types or tissues"/>
</dbReference>
<dbReference type="ExpressionAtlas" id="O00744">
    <property type="expression patterns" value="baseline and differential"/>
</dbReference>
<dbReference type="GO" id="GO:0005576">
    <property type="term" value="C:extracellular region"/>
    <property type="evidence" value="ECO:0000304"/>
    <property type="project" value="Reactome"/>
</dbReference>
<dbReference type="GO" id="GO:0005615">
    <property type="term" value="C:extracellular space"/>
    <property type="evidence" value="ECO:0000318"/>
    <property type="project" value="GO_Central"/>
</dbReference>
<dbReference type="GO" id="GO:0005125">
    <property type="term" value="F:cytokine activity"/>
    <property type="evidence" value="ECO:0000318"/>
    <property type="project" value="GO_Central"/>
</dbReference>
<dbReference type="GO" id="GO:0005109">
    <property type="term" value="F:frizzled binding"/>
    <property type="evidence" value="ECO:0000318"/>
    <property type="project" value="GO_Central"/>
</dbReference>
<dbReference type="GO" id="GO:0048018">
    <property type="term" value="F:receptor ligand activity"/>
    <property type="evidence" value="ECO:0000305"/>
    <property type="project" value="BHF-UCL"/>
</dbReference>
<dbReference type="GO" id="GO:0060346">
    <property type="term" value="P:bone trabecula formation"/>
    <property type="evidence" value="ECO:0007669"/>
    <property type="project" value="Ensembl"/>
</dbReference>
<dbReference type="GO" id="GO:0060070">
    <property type="term" value="P:canonical Wnt signaling pathway"/>
    <property type="evidence" value="ECO:0000314"/>
    <property type="project" value="BHF-UCL"/>
</dbReference>
<dbReference type="GO" id="GO:0045165">
    <property type="term" value="P:cell fate commitment"/>
    <property type="evidence" value="ECO:0000318"/>
    <property type="project" value="GO_Central"/>
</dbReference>
<dbReference type="GO" id="GO:0071320">
    <property type="term" value="P:cellular response to cAMP"/>
    <property type="evidence" value="ECO:0007669"/>
    <property type="project" value="Ensembl"/>
</dbReference>
<dbReference type="GO" id="GO:0071374">
    <property type="term" value="P:cellular response to parathyroid hormone stimulus"/>
    <property type="evidence" value="ECO:0007669"/>
    <property type="project" value="Ensembl"/>
</dbReference>
<dbReference type="GO" id="GO:0071300">
    <property type="term" value="P:cellular response to retinoic acid"/>
    <property type="evidence" value="ECO:0000250"/>
    <property type="project" value="UniProtKB"/>
</dbReference>
<dbReference type="GO" id="GO:0002062">
    <property type="term" value="P:chondrocyte differentiation"/>
    <property type="evidence" value="ECO:0000270"/>
    <property type="project" value="UniProtKB"/>
</dbReference>
<dbReference type="GO" id="GO:0030855">
    <property type="term" value="P:epithelial cell differentiation"/>
    <property type="evidence" value="ECO:0007669"/>
    <property type="project" value="Ensembl"/>
</dbReference>
<dbReference type="GO" id="GO:0045444">
    <property type="term" value="P:fat cell differentiation"/>
    <property type="evidence" value="ECO:0007669"/>
    <property type="project" value="Ensembl"/>
</dbReference>
<dbReference type="GO" id="GO:0061196">
    <property type="term" value="P:fungiform papilla development"/>
    <property type="evidence" value="ECO:0007669"/>
    <property type="project" value="Ensembl"/>
</dbReference>
<dbReference type="GO" id="GO:0000086">
    <property type="term" value="P:G2/M transition of mitotic cell cycle"/>
    <property type="evidence" value="ECO:0007669"/>
    <property type="project" value="Ensembl"/>
</dbReference>
<dbReference type="GO" id="GO:0071425">
    <property type="term" value="P:hematopoietic stem cell proliferation"/>
    <property type="evidence" value="ECO:0000314"/>
    <property type="project" value="BHF-UCL"/>
</dbReference>
<dbReference type="GO" id="GO:0006629">
    <property type="term" value="P:lipid metabolic process"/>
    <property type="evidence" value="ECO:0007669"/>
    <property type="project" value="Ensembl"/>
</dbReference>
<dbReference type="GO" id="GO:0048627">
    <property type="term" value="P:myoblast development"/>
    <property type="evidence" value="ECO:0007669"/>
    <property type="project" value="Ensembl"/>
</dbReference>
<dbReference type="GO" id="GO:0014835">
    <property type="term" value="P:myoblast differentiation involved in skeletal muscle regeneration"/>
    <property type="evidence" value="ECO:0007669"/>
    <property type="project" value="Ensembl"/>
</dbReference>
<dbReference type="GO" id="GO:0120163">
    <property type="term" value="P:negative regulation of cold-induced thermogenesis"/>
    <property type="evidence" value="ECO:0000250"/>
    <property type="project" value="YuBioLab"/>
</dbReference>
<dbReference type="GO" id="GO:0050680">
    <property type="term" value="P:negative regulation of epithelial cell proliferation"/>
    <property type="evidence" value="ECO:0007669"/>
    <property type="project" value="Ensembl"/>
</dbReference>
<dbReference type="GO" id="GO:0045599">
    <property type="term" value="P:negative regulation of fat cell differentiation"/>
    <property type="evidence" value="ECO:0000314"/>
    <property type="project" value="BHF-UCL"/>
</dbReference>
<dbReference type="GO" id="GO:0000122">
    <property type="term" value="P:negative regulation of transcription by RNA polymerase II"/>
    <property type="evidence" value="ECO:0007669"/>
    <property type="project" value="Ensembl"/>
</dbReference>
<dbReference type="GO" id="GO:0030182">
    <property type="term" value="P:neuron differentiation"/>
    <property type="evidence" value="ECO:0000250"/>
    <property type="project" value="UniProtKB"/>
</dbReference>
<dbReference type="GO" id="GO:0001649">
    <property type="term" value="P:osteoblast differentiation"/>
    <property type="evidence" value="ECO:0007669"/>
    <property type="project" value="Ensembl"/>
</dbReference>
<dbReference type="GO" id="GO:0043065">
    <property type="term" value="P:positive regulation of apoptotic process"/>
    <property type="evidence" value="ECO:0000315"/>
    <property type="project" value="BHF-UCL"/>
</dbReference>
<dbReference type="GO" id="GO:0030501">
    <property type="term" value="P:positive regulation of bone mineralization"/>
    <property type="evidence" value="ECO:0007669"/>
    <property type="project" value="Ensembl"/>
</dbReference>
<dbReference type="GO" id="GO:0090263">
    <property type="term" value="P:positive regulation of canonical Wnt signaling pathway"/>
    <property type="evidence" value="ECO:0007669"/>
    <property type="project" value="Ensembl"/>
</dbReference>
<dbReference type="GO" id="GO:0030858">
    <property type="term" value="P:positive regulation of epithelial cell differentiation"/>
    <property type="evidence" value="ECO:0007669"/>
    <property type="project" value="Ensembl"/>
</dbReference>
<dbReference type="GO" id="GO:0010971">
    <property type="term" value="P:positive regulation of G2/M transition of mitotic cell cycle"/>
    <property type="evidence" value="ECO:0007669"/>
    <property type="project" value="Ensembl"/>
</dbReference>
<dbReference type="GO" id="GO:1902035">
    <property type="term" value="P:positive regulation of hematopoietic stem cell proliferation"/>
    <property type="evidence" value="ECO:0007669"/>
    <property type="project" value="Ensembl"/>
</dbReference>
<dbReference type="GO" id="GO:0045669">
    <property type="term" value="P:positive regulation of osteoblast differentiation"/>
    <property type="evidence" value="ECO:0007669"/>
    <property type="project" value="Ensembl"/>
</dbReference>
<dbReference type="GO" id="GO:0045899">
    <property type="term" value="P:positive regulation of RNA polymerase II transcription preinitiation complex assembly"/>
    <property type="evidence" value="ECO:0007669"/>
    <property type="project" value="Ensembl"/>
</dbReference>
<dbReference type="GO" id="GO:0045582">
    <property type="term" value="P:positive regulation of T cell differentiation"/>
    <property type="evidence" value="ECO:0007669"/>
    <property type="project" value="Ensembl"/>
</dbReference>
<dbReference type="GO" id="GO:0051885">
    <property type="term" value="P:positive regulation of timing of anagen"/>
    <property type="evidence" value="ECO:0007669"/>
    <property type="project" value="Ensembl"/>
</dbReference>
<dbReference type="GO" id="GO:0050821">
    <property type="term" value="P:protein stabilization"/>
    <property type="evidence" value="ECO:0000314"/>
    <property type="project" value="BHF-UCL"/>
</dbReference>
<dbReference type="GO" id="GO:0032434">
    <property type="term" value="P:regulation of proteasomal ubiquitin-dependent protein catabolic process"/>
    <property type="evidence" value="ECO:0007669"/>
    <property type="project" value="Ensembl"/>
</dbReference>
<dbReference type="GO" id="GO:0048641">
    <property type="term" value="P:regulation of skeletal muscle tissue development"/>
    <property type="evidence" value="ECO:0007669"/>
    <property type="project" value="Ensembl"/>
</dbReference>
<dbReference type="GO" id="GO:0050909">
    <property type="term" value="P:sensory perception of taste"/>
    <property type="evidence" value="ECO:0007669"/>
    <property type="project" value="Ensembl"/>
</dbReference>
<dbReference type="GO" id="GO:0048741">
    <property type="term" value="P:skeletal muscle fiber development"/>
    <property type="evidence" value="ECO:0007669"/>
    <property type="project" value="Ensembl"/>
</dbReference>
<dbReference type="GO" id="GO:0007224">
    <property type="term" value="P:smoothened signaling pathway"/>
    <property type="evidence" value="ECO:0007669"/>
    <property type="project" value="Ensembl"/>
</dbReference>
<dbReference type="GO" id="GO:0030217">
    <property type="term" value="P:T cell differentiation"/>
    <property type="evidence" value="ECO:0007669"/>
    <property type="project" value="Ensembl"/>
</dbReference>
<dbReference type="GO" id="GO:0006366">
    <property type="term" value="P:transcription by RNA polymerase II"/>
    <property type="evidence" value="ECO:0007669"/>
    <property type="project" value="Ensembl"/>
</dbReference>
<dbReference type="CDD" id="cd19356">
    <property type="entry name" value="Wnt_Wnt10b"/>
    <property type="match status" value="1"/>
</dbReference>
<dbReference type="FunFam" id="3.30.2460.20:FF:000001">
    <property type="entry name" value="Wnt homolog"/>
    <property type="match status" value="1"/>
</dbReference>
<dbReference type="Gene3D" id="3.30.2460.20">
    <property type="match status" value="1"/>
</dbReference>
<dbReference type="InterPro" id="IPR005817">
    <property type="entry name" value="Wnt"/>
</dbReference>
<dbReference type="InterPro" id="IPR013302">
    <property type="entry name" value="Wnt10"/>
</dbReference>
<dbReference type="InterPro" id="IPR043158">
    <property type="entry name" value="Wnt_C"/>
</dbReference>
<dbReference type="InterPro" id="IPR018161">
    <property type="entry name" value="Wnt_CS"/>
</dbReference>
<dbReference type="PANTHER" id="PTHR12027:SF76">
    <property type="entry name" value="PROTEIN WNT-10B"/>
    <property type="match status" value="1"/>
</dbReference>
<dbReference type="PANTHER" id="PTHR12027">
    <property type="entry name" value="WNT RELATED"/>
    <property type="match status" value="1"/>
</dbReference>
<dbReference type="Pfam" id="PF00110">
    <property type="entry name" value="wnt"/>
    <property type="match status" value="1"/>
</dbReference>
<dbReference type="PRINTS" id="PR01893">
    <property type="entry name" value="WNT10PROTEIN"/>
</dbReference>
<dbReference type="PRINTS" id="PR01349">
    <property type="entry name" value="WNTPROTEIN"/>
</dbReference>
<dbReference type="SMART" id="SM00097">
    <property type="entry name" value="WNT1"/>
    <property type="match status" value="1"/>
</dbReference>
<dbReference type="PROSITE" id="PS00246">
    <property type="entry name" value="WNT1"/>
    <property type="match status" value="1"/>
</dbReference>
<keyword id="KW-0025">Alternative splicing</keyword>
<keyword id="KW-0217">Developmental protein</keyword>
<keyword id="KW-0225">Disease variant</keyword>
<keyword id="KW-1015">Disulfide bond</keyword>
<keyword id="KW-0272">Extracellular matrix</keyword>
<keyword id="KW-0325">Glycoprotein</keyword>
<keyword id="KW-0449">Lipoprotein</keyword>
<keyword id="KW-0597">Phosphoprotein</keyword>
<keyword id="KW-1267">Proteomics identification</keyword>
<keyword id="KW-1185">Reference proteome</keyword>
<keyword id="KW-0964">Secreted</keyword>
<keyword id="KW-0732">Signal</keyword>
<keyword id="KW-0879">Wnt signaling pathway</keyword>
<feature type="signal peptide" evidence="4">
    <location>
        <begin position="1"/>
        <end position="28"/>
    </location>
</feature>
<feature type="chain" id="PRO_0000041463" description="Protein Wnt-10b">
    <location>
        <begin position="29"/>
        <end position="389"/>
    </location>
</feature>
<feature type="region of interest" description="Disordered" evidence="5">
    <location>
        <begin position="171"/>
        <end position="197"/>
    </location>
</feature>
<feature type="compositionally biased region" description="Pro residues" evidence="5">
    <location>
        <begin position="177"/>
        <end position="189"/>
    </location>
</feature>
<feature type="modified residue" description="Phosphothreonine" evidence="15">
    <location>
        <position position="46"/>
    </location>
</feature>
<feature type="lipid moiety-binding region" description="O-palmitoleoyl serine; by PORCN" evidence="3">
    <location>
        <position position="253"/>
    </location>
</feature>
<feature type="glycosylation site" description="N-linked (GlcNAc...) asparagine" evidence="4">
    <location>
        <position position="93"/>
    </location>
</feature>
<feature type="glycosylation site" description="N-linked (GlcNAc...) asparagine" evidence="4">
    <location>
        <position position="335"/>
    </location>
</feature>
<feature type="disulfide bond" evidence="2">
    <location>
        <begin position="83"/>
        <end position="94"/>
    </location>
</feature>
<feature type="disulfide bond" evidence="2">
    <location>
        <begin position="136"/>
        <end position="144"/>
    </location>
</feature>
<feature type="disulfide bond" evidence="2">
    <location>
        <begin position="146"/>
        <end position="199"/>
    </location>
</feature>
<feature type="disulfide bond" evidence="2">
    <location>
        <begin position="247"/>
        <end position="261"/>
    </location>
</feature>
<feature type="disulfide bond" evidence="2">
    <location>
        <begin position="249"/>
        <end position="256"/>
    </location>
</feature>
<feature type="disulfide bond" evidence="2">
    <location>
        <begin position="318"/>
        <end position="349"/>
    </location>
</feature>
<feature type="disulfide bond" evidence="2">
    <location>
        <begin position="334"/>
        <end position="344"/>
    </location>
</feature>
<feature type="disulfide bond" evidence="2">
    <location>
        <begin position="348"/>
        <end position="388"/>
    </location>
</feature>
<feature type="disulfide bond" evidence="2">
    <location>
        <begin position="364"/>
        <end position="379"/>
    </location>
</feature>
<feature type="disulfide bond" evidence="2">
    <location>
        <begin position="366"/>
        <end position="376"/>
    </location>
</feature>
<feature type="disulfide bond" evidence="2">
    <location>
        <begin position="371"/>
        <end position="372"/>
    </location>
</feature>
<feature type="splice variant" id="VSP_056289" description="In isoform 2." evidence="10">
    <original>SFPHSLPSPGPGSSPSPGPQ</original>
    <variation>LPGTSRHECESTTTGWGARW</variation>
    <location>
        <begin position="172"/>
        <end position="191"/>
    </location>
</feature>
<feature type="splice variant" id="VSP_056290" description="In isoform 2." evidence="10">
    <location>
        <begin position="192"/>
        <end position="389"/>
    </location>
</feature>
<feature type="sequence variant" id="VAR_062512" description="In dbSNP:rs151284263." evidence="6">
    <original>H</original>
    <variation>Y</variation>
    <location>
        <position position="77"/>
    </location>
</feature>
<feature type="sequence variant" id="VAR_076926" description="In STHAG8; reduced activation of Wnt signaling; reduced endothelial differentiation; dbSNP:rs779326570." evidence="9">
    <original>R</original>
    <variation>Q</variation>
    <location>
        <position position="211"/>
    </location>
</feature>
<feature type="sequence variant" id="VAR_062513" description="Associated with obesity; abrogates the ability of WNT10B to activate canonical Wnt signaling and blocks adipogenesis." evidence="6">
    <original>C</original>
    <variation>Y</variation>
    <location>
        <position position="256"/>
    </location>
</feature>
<feature type="sequence variant" id="VAR_062514" description="In dbSNP:rs146010731." evidence="6">
    <original>I</original>
    <variation>T</variation>
    <location>
        <position position="285"/>
    </location>
</feature>
<feature type="sequence variant" id="VAR_062515" description="In dbSNP:rs35034312." evidence="6">
    <original>P</original>
    <variation>S</variation>
    <location>
        <position position="301"/>
    </location>
</feature>
<feature type="sequence variant" id="VAR_062516" description="In SHFM6; dbSNP:rs121918349." evidence="7">
    <original>R</original>
    <variation>W</variation>
    <location>
        <position position="332"/>
    </location>
</feature>
<feature type="sequence conflict" description="In Ref. 1; AAB51685." evidence="11" ref="1">
    <original>G</original>
    <variation>D</variation>
    <location>
        <position position="60"/>
    </location>
</feature>
<feature type="sequence conflict" description="In Ref. 7; CAA65769." evidence="11" ref="7">
    <original>K</original>
    <variation>R</variation>
    <location>
        <position position="149"/>
    </location>
</feature>
<feature type="sequence conflict" description="In Ref. 7; CAA65769." evidence="11" ref="7">
    <original>F</original>
    <variation>S</variation>
    <location>
        <position position="295"/>
    </location>
</feature>
<feature type="sequence conflict" description="In Ref. 7; CAA65769." evidence="11" ref="7">
    <original>F</original>
    <variation>L</variation>
    <location>
        <position position="311"/>
    </location>
</feature>
<accession>O00744</accession>
<accession>B2R7A5</accession>
<accession>O00747</accession>
<accession>Q4VAJ4</accession>
<accession>Q4VAJ5</accession>
<accession>Q8WZ97</accession>
<sequence>MLEEPRPRPPPSGLAGLLFLALCSRALSNEILGLKLPGEPPLTANTVCLTLSGLSKRQLGLCLRNPDVTASALQGLHIAVHECQHQLRDQRWNCSALEGGGRLPHHSAILKRGFRESAFSFSMLAAGVMHAVATACSLGKLVSCGCGWKGSGEQDRLRAKLLQLQALSRGKSFPHSLPSPGPGSSPSPGPQDTWEWGGCNHDMDFGEKFSRDFLDSREAPRDIQARMRIHNNRVGRQVVTENLKRKCKCHGTSGSCQFKTCWRAAPEFRAVGAALRERLGRAIFIDTHNRNSGAFQPRLRPRRLSGELVYFEKSPDFCERDPTMGSPGTRGRACNKTSRLLDGCGSLCCGRGHNVLRQTRVERCHCRFHWCCYVLCDECKVTEWVNVCK</sequence>
<organism>
    <name type="scientific">Homo sapiens</name>
    <name type="common">Human</name>
    <dbReference type="NCBI Taxonomy" id="9606"/>
    <lineage>
        <taxon>Eukaryota</taxon>
        <taxon>Metazoa</taxon>
        <taxon>Chordata</taxon>
        <taxon>Craniata</taxon>
        <taxon>Vertebrata</taxon>
        <taxon>Euteleostomi</taxon>
        <taxon>Mammalia</taxon>
        <taxon>Eutheria</taxon>
        <taxon>Euarchontoglires</taxon>
        <taxon>Primates</taxon>
        <taxon>Haplorrhini</taxon>
        <taxon>Catarrhini</taxon>
        <taxon>Hominidae</taxon>
        <taxon>Homo</taxon>
    </lineage>
</organism>
<gene>
    <name type="primary">WNT10B</name>
    <name type="synonym">WNT12</name>
</gene>